<name>DRC9_RAT</name>
<dbReference type="EMBL" id="BC087078">
    <property type="protein sequence ID" value="AAH87078.1"/>
    <property type="molecule type" value="mRNA"/>
</dbReference>
<dbReference type="RefSeq" id="NP_001014252.1">
    <property type="nucleotide sequence ID" value="NM_001014230.1"/>
</dbReference>
<dbReference type="SMR" id="Q5PQQ6"/>
<dbReference type="FunCoup" id="Q5PQQ6">
    <property type="interactions" value="364"/>
</dbReference>
<dbReference type="STRING" id="10116.ENSRNOP00000071586"/>
<dbReference type="PhosphoSitePlus" id="Q5PQQ6"/>
<dbReference type="PaxDb" id="10116-ENSRNOP00000037862"/>
<dbReference type="GeneID" id="363796"/>
<dbReference type="KEGG" id="rno:363796"/>
<dbReference type="UCSC" id="RGD:1311606">
    <property type="organism name" value="rat"/>
</dbReference>
<dbReference type="AGR" id="RGD:1311606"/>
<dbReference type="CTD" id="84223"/>
<dbReference type="RGD" id="1311606">
    <property type="gene designation" value="Iqcg"/>
</dbReference>
<dbReference type="eggNOG" id="ENOG502QQR7">
    <property type="taxonomic scope" value="Eukaryota"/>
</dbReference>
<dbReference type="InParanoid" id="Q5PQQ6"/>
<dbReference type="PhylomeDB" id="Q5PQQ6"/>
<dbReference type="PRO" id="PR:Q5PQQ6"/>
<dbReference type="Proteomes" id="UP000002494">
    <property type="component" value="Unplaced"/>
</dbReference>
<dbReference type="GO" id="GO:0005737">
    <property type="term" value="C:cytoplasm"/>
    <property type="evidence" value="ECO:0000250"/>
    <property type="project" value="UniProtKB"/>
</dbReference>
<dbReference type="GO" id="GO:0005829">
    <property type="term" value="C:cytosol"/>
    <property type="evidence" value="ECO:0000266"/>
    <property type="project" value="RGD"/>
</dbReference>
<dbReference type="GO" id="GO:0002177">
    <property type="term" value="C:manchette"/>
    <property type="evidence" value="ECO:0000250"/>
    <property type="project" value="UniProtKB"/>
</dbReference>
<dbReference type="GO" id="GO:0031514">
    <property type="term" value="C:motile cilium"/>
    <property type="evidence" value="ECO:0000250"/>
    <property type="project" value="UniProtKB"/>
</dbReference>
<dbReference type="GO" id="GO:0036126">
    <property type="term" value="C:sperm flagellum"/>
    <property type="evidence" value="ECO:0000250"/>
    <property type="project" value="UniProtKB"/>
</dbReference>
<dbReference type="GO" id="GO:0005516">
    <property type="term" value="F:calmodulin binding"/>
    <property type="evidence" value="ECO:0000250"/>
    <property type="project" value="UniProtKB"/>
</dbReference>
<dbReference type="GO" id="GO:0030544">
    <property type="term" value="F:Hsp70 protein binding"/>
    <property type="evidence" value="ECO:0000266"/>
    <property type="project" value="RGD"/>
</dbReference>
<dbReference type="GO" id="GO:0044782">
    <property type="term" value="P:cilium organization"/>
    <property type="evidence" value="ECO:0000318"/>
    <property type="project" value="GO_Central"/>
</dbReference>
<dbReference type="GO" id="GO:0007288">
    <property type="term" value="P:sperm axoneme assembly"/>
    <property type="evidence" value="ECO:0000250"/>
    <property type="project" value="UniProtKB"/>
</dbReference>
<dbReference type="GO" id="GO:0007286">
    <property type="term" value="P:spermatid development"/>
    <property type="evidence" value="ECO:0000250"/>
    <property type="project" value="UniProtKB"/>
</dbReference>
<dbReference type="CDD" id="cd23766">
    <property type="entry name" value="IQCG"/>
    <property type="match status" value="1"/>
</dbReference>
<dbReference type="InterPro" id="IPR000048">
    <property type="entry name" value="IQ_motif_EF-hand-BS"/>
</dbReference>
<dbReference type="InterPro" id="IPR042618">
    <property type="entry name" value="IQCG"/>
</dbReference>
<dbReference type="PANTHER" id="PTHR14871">
    <property type="entry name" value="DYNEIN REGULATORY COMPLEX PROTEIN 9"/>
    <property type="match status" value="1"/>
</dbReference>
<dbReference type="PANTHER" id="PTHR14871:SF1">
    <property type="entry name" value="DYNEIN REGULATORY COMPLEX PROTEIN 9"/>
    <property type="match status" value="1"/>
</dbReference>
<dbReference type="Pfam" id="PF00612">
    <property type="entry name" value="IQ"/>
    <property type="match status" value="1"/>
</dbReference>
<dbReference type="PROSITE" id="PS50096">
    <property type="entry name" value="IQ"/>
    <property type="match status" value="1"/>
</dbReference>
<gene>
    <name type="primary">Iqcg</name>
    <name evidence="2" type="synonym">Drc9</name>
</gene>
<sequence>MEGEELETTGSLSEVFQPEVTMAVTGEPPKPAEEELEEEEEETSPEVIDTLSLLDVLRVSAIMEDIIDQLSILGYIIPVQYERRQSLSQKTSHEGAPMVPSTPKISASLIAKDKPVVSDSKQRGQDFFFKKATKQTTMTLETMRKIQNDRQYFSDVIANAMMEMQACGSFSSLLEALGKERDAKMNFHDVITREGKGRKQIKSLQKQLVDVKRERQMQVQNGNEYIAHLRDQLQEVKAKTNLENLYMKRNTELQVSQTQKKCNRAEELLLEEIEKLRLKTEEENRVHMEIEMFLRNQQQKLEEKLEFWMEKFDKDTEAKQNELNALKAAKASDLAHLQDLAKMIREYEQVIIEDRLEKEKTRKKLEQDDLELRSIVKLQAWWRGTVVRREIGSFKMPKKEKDDSKDAKGKEKDKRRGKK</sequence>
<evidence type="ECO:0000250" key="1">
    <source>
        <dbReference type="UniProtKB" id="A3KQH2"/>
    </source>
</evidence>
<evidence type="ECO:0000250" key="2">
    <source>
        <dbReference type="UniProtKB" id="A8HQ54"/>
    </source>
</evidence>
<evidence type="ECO:0000250" key="3">
    <source>
        <dbReference type="UniProtKB" id="Q80W32"/>
    </source>
</evidence>
<evidence type="ECO:0000250" key="4">
    <source>
        <dbReference type="UniProtKB" id="Q9H095"/>
    </source>
</evidence>
<evidence type="ECO:0000255" key="5">
    <source>
        <dbReference type="PROSITE-ProRule" id="PRU00116"/>
    </source>
</evidence>
<evidence type="ECO:0000256" key="6">
    <source>
        <dbReference type="SAM" id="MobiDB-lite"/>
    </source>
</evidence>
<evidence type="ECO:0000305" key="7"/>
<accession>Q5PQQ6</accession>
<keyword id="KW-0112">Calmodulin-binding</keyword>
<keyword id="KW-0966">Cell projection</keyword>
<keyword id="KW-0969">Cilium</keyword>
<keyword id="KW-0963">Cytoplasm</keyword>
<keyword id="KW-0206">Cytoskeleton</keyword>
<keyword id="KW-0221">Differentiation</keyword>
<keyword id="KW-0282">Flagellum</keyword>
<keyword id="KW-1185">Reference proteome</keyword>
<keyword id="KW-0744">Spermatogenesis</keyword>
<comment type="function">
    <text evidence="1 2 3">Component of the nexin-dynein regulatory complex (N-DRC), a key regulator of ciliary/flagellar motility which maintains the alignment and integrity of the distal axoneme and regulates microtubule sliding in motile axonemes. Binds calmodulin when cellular Ca(2+) levels are low and thereby contributes to the regulation of calcium and calmodulin-dependent protein kinase IV (CAMK4) activity; contributes to the regulation of CAMK4 signaling cascades. Required for normal axoneme assembly in sperm flagella, normal sperm tail formation and for male fertility.</text>
</comment>
<comment type="subunit">
    <text evidence="2 3 4">Component of the nexin-dynein regulatory complex (N-DRC). Interacts (via IQ domain) with CALM when calcium levels are low. Does not interact with CALM in the presence of Ca(2+). Interacts with the HSP70 proteins HSPA1L and HSPA8. May form a complex with CAMK4 and HSP70.</text>
</comment>
<comment type="subcellular location">
    <subcellularLocation>
        <location evidence="3">Cytoplasm</location>
    </subcellularLocation>
    <subcellularLocation>
        <location evidence="3">Cell projection</location>
        <location evidence="3">Cilium</location>
        <location evidence="3">Flagellum</location>
    </subcellularLocation>
    <subcellularLocation>
        <location evidence="3">Cell projection</location>
        <location evidence="3">Cilium</location>
    </subcellularLocation>
    <subcellularLocation>
        <location evidence="3">Cytoplasm</location>
        <location evidence="3">Cytoskeleton</location>
    </subcellularLocation>
    <subcellularLocation>
        <location evidence="2">Cytoplasm</location>
        <location evidence="2">Cytoskeleton</location>
        <location evidence="2">Flagellum axoneme</location>
    </subcellularLocation>
    <text evidence="3">First detected in the cytoplasm of pachytene spermatocytes. Colocalizes with alpha-tubulin at the manchette in developing spermatids. Detected in the flagellum of mature testicular spermatozoa, and in the flagellum and post-acrosomal region of the head of epididymal spermatozoa. Detected in cilia in trachea and oviduct.</text>
</comment>
<comment type="domain">
    <text evidence="4">The IQ domain mediates interaction with calmodulin when cellular Ca(2+) levels are low.</text>
</comment>
<comment type="similarity">
    <text evidence="7">Belongs to the DRC9 family.</text>
</comment>
<organism>
    <name type="scientific">Rattus norvegicus</name>
    <name type="common">Rat</name>
    <dbReference type="NCBI Taxonomy" id="10116"/>
    <lineage>
        <taxon>Eukaryota</taxon>
        <taxon>Metazoa</taxon>
        <taxon>Chordata</taxon>
        <taxon>Craniata</taxon>
        <taxon>Vertebrata</taxon>
        <taxon>Euteleostomi</taxon>
        <taxon>Mammalia</taxon>
        <taxon>Eutheria</taxon>
        <taxon>Euarchontoglires</taxon>
        <taxon>Glires</taxon>
        <taxon>Rodentia</taxon>
        <taxon>Myomorpha</taxon>
        <taxon>Muroidea</taxon>
        <taxon>Muridae</taxon>
        <taxon>Murinae</taxon>
        <taxon>Rattus</taxon>
    </lineage>
</organism>
<proteinExistence type="evidence at transcript level"/>
<reference key="1">
    <citation type="journal article" date="2004" name="Genome Res.">
        <title>The status, quality, and expansion of the NIH full-length cDNA project: the Mammalian Gene Collection (MGC).</title>
        <authorList>
            <consortium name="The MGC Project Team"/>
        </authorList>
    </citation>
    <scope>NUCLEOTIDE SEQUENCE [LARGE SCALE MRNA]</scope>
    <source>
        <tissue>Testis</tissue>
    </source>
</reference>
<protein>
    <recommendedName>
        <fullName evidence="2">Dynein regulatory complex protein 9</fullName>
    </recommendedName>
    <alternativeName>
        <fullName>IQ domain-containing protein G</fullName>
    </alternativeName>
</protein>
<feature type="chain" id="PRO_0000282564" description="Dynein regulatory complex protein 9">
    <location>
        <begin position="1"/>
        <end position="419"/>
    </location>
</feature>
<feature type="domain" description="IQ" evidence="5">
    <location>
        <begin position="371"/>
        <end position="400"/>
    </location>
</feature>
<feature type="region of interest" description="Disordered" evidence="6">
    <location>
        <begin position="1"/>
        <end position="47"/>
    </location>
</feature>
<feature type="region of interest" description="Disordered" evidence="6">
    <location>
        <begin position="393"/>
        <end position="419"/>
    </location>
</feature>
<feature type="compositionally biased region" description="Acidic residues" evidence="6">
    <location>
        <begin position="34"/>
        <end position="44"/>
    </location>
</feature>